<protein>
    <recommendedName>
        <fullName evidence="1">Ribosomal RNA large subunit methyltransferase M</fullName>
        <ecNumber evidence="1">2.1.1.186</ecNumber>
    </recommendedName>
    <alternativeName>
        <fullName evidence="1">23S rRNA (cytidine2498-2'-O)-methyltransferase</fullName>
    </alternativeName>
    <alternativeName>
        <fullName evidence="1">23S rRNA 2'-O-ribose methyltransferase RlmM</fullName>
    </alternativeName>
</protein>
<proteinExistence type="inferred from homology"/>
<evidence type="ECO:0000255" key="1">
    <source>
        <dbReference type="HAMAP-Rule" id="MF_01551"/>
    </source>
</evidence>
<accession>A3QGM9</accession>
<feature type="chain" id="PRO_0000314538" description="Ribosomal RNA large subunit methyltransferase M">
    <location>
        <begin position="1"/>
        <end position="363"/>
    </location>
</feature>
<feature type="active site" description="Proton acceptor" evidence="1">
    <location>
        <position position="305"/>
    </location>
</feature>
<feature type="binding site" evidence="1">
    <location>
        <position position="187"/>
    </location>
    <ligand>
        <name>S-adenosyl-L-methionine</name>
        <dbReference type="ChEBI" id="CHEBI:59789"/>
    </ligand>
</feature>
<feature type="binding site" evidence="1">
    <location>
        <begin position="220"/>
        <end position="223"/>
    </location>
    <ligand>
        <name>S-adenosyl-L-methionine</name>
        <dbReference type="ChEBI" id="CHEBI:59789"/>
    </ligand>
</feature>
<feature type="binding site" evidence="1">
    <location>
        <position position="239"/>
    </location>
    <ligand>
        <name>S-adenosyl-L-methionine</name>
        <dbReference type="ChEBI" id="CHEBI:59789"/>
    </ligand>
</feature>
<feature type="binding site" evidence="1">
    <location>
        <position position="259"/>
    </location>
    <ligand>
        <name>S-adenosyl-L-methionine</name>
        <dbReference type="ChEBI" id="CHEBI:59789"/>
    </ligand>
</feature>
<feature type="binding site" evidence="1">
    <location>
        <position position="276"/>
    </location>
    <ligand>
        <name>S-adenosyl-L-methionine</name>
        <dbReference type="ChEBI" id="CHEBI:59789"/>
    </ligand>
</feature>
<name>RLMM_SHELP</name>
<reference key="1">
    <citation type="submission" date="2007-03" db="EMBL/GenBank/DDBJ databases">
        <title>Complete sequence of Shewanella loihica PV-4.</title>
        <authorList>
            <consortium name="US DOE Joint Genome Institute"/>
            <person name="Copeland A."/>
            <person name="Lucas S."/>
            <person name="Lapidus A."/>
            <person name="Barry K."/>
            <person name="Detter J.C."/>
            <person name="Glavina del Rio T."/>
            <person name="Hammon N."/>
            <person name="Israni S."/>
            <person name="Dalin E."/>
            <person name="Tice H."/>
            <person name="Pitluck S."/>
            <person name="Chain P."/>
            <person name="Malfatti S."/>
            <person name="Shin M."/>
            <person name="Vergez L."/>
            <person name="Schmutz J."/>
            <person name="Larimer F."/>
            <person name="Land M."/>
            <person name="Hauser L."/>
            <person name="Kyrpides N."/>
            <person name="Mikhailova N."/>
            <person name="Romine M.F."/>
            <person name="Serres G."/>
            <person name="Fredrickson J."/>
            <person name="Tiedje J."/>
            <person name="Richardson P."/>
        </authorList>
    </citation>
    <scope>NUCLEOTIDE SEQUENCE [LARGE SCALE GENOMIC DNA]</scope>
    <source>
        <strain>ATCC BAA-1088 / PV-4</strain>
    </source>
</reference>
<dbReference type="EC" id="2.1.1.186" evidence="1"/>
<dbReference type="EMBL" id="CP000606">
    <property type="protein sequence ID" value="ABO24627.1"/>
    <property type="molecule type" value="Genomic_DNA"/>
</dbReference>
<dbReference type="RefSeq" id="WP_011866558.1">
    <property type="nucleotide sequence ID" value="NC_009092.1"/>
</dbReference>
<dbReference type="SMR" id="A3QGM9"/>
<dbReference type="STRING" id="323850.Shew_2761"/>
<dbReference type="KEGG" id="slo:Shew_2761"/>
<dbReference type="eggNOG" id="COG2933">
    <property type="taxonomic scope" value="Bacteria"/>
</dbReference>
<dbReference type="HOGENOM" id="CLU_043780_0_0_6"/>
<dbReference type="OrthoDB" id="154490at2"/>
<dbReference type="Proteomes" id="UP000001558">
    <property type="component" value="Chromosome"/>
</dbReference>
<dbReference type="GO" id="GO:0005737">
    <property type="term" value="C:cytoplasm"/>
    <property type="evidence" value="ECO:0007669"/>
    <property type="project" value="UniProtKB-SubCell"/>
</dbReference>
<dbReference type="GO" id="GO:0008757">
    <property type="term" value="F:S-adenosylmethionine-dependent methyltransferase activity"/>
    <property type="evidence" value="ECO:0007669"/>
    <property type="project" value="UniProtKB-UniRule"/>
</dbReference>
<dbReference type="GO" id="GO:0032259">
    <property type="term" value="P:methylation"/>
    <property type="evidence" value="ECO:0007669"/>
    <property type="project" value="UniProtKB-KW"/>
</dbReference>
<dbReference type="GO" id="GO:0006364">
    <property type="term" value="P:rRNA processing"/>
    <property type="evidence" value="ECO:0007669"/>
    <property type="project" value="UniProtKB-UniRule"/>
</dbReference>
<dbReference type="Gene3D" id="3.30.2300.20">
    <property type="match status" value="1"/>
</dbReference>
<dbReference type="Gene3D" id="3.30.70.2810">
    <property type="match status" value="1"/>
</dbReference>
<dbReference type="Gene3D" id="3.40.50.150">
    <property type="entry name" value="Vaccinia Virus protein VP39"/>
    <property type="match status" value="1"/>
</dbReference>
<dbReference type="HAMAP" id="MF_01551">
    <property type="entry name" value="23SrRNA_methyltr_M"/>
    <property type="match status" value="1"/>
</dbReference>
<dbReference type="InterPro" id="IPR040739">
    <property type="entry name" value="RlmM_FDX"/>
</dbReference>
<dbReference type="InterPro" id="IPR048646">
    <property type="entry name" value="RlmM_THUMP-like"/>
</dbReference>
<dbReference type="InterPro" id="IPR002877">
    <property type="entry name" value="RNA_MeTrfase_FtsJ_dom"/>
</dbReference>
<dbReference type="InterPro" id="IPR011224">
    <property type="entry name" value="rRNA_MeTrfase_M"/>
</dbReference>
<dbReference type="InterPro" id="IPR029063">
    <property type="entry name" value="SAM-dependent_MTases_sf"/>
</dbReference>
<dbReference type="NCBIfam" id="NF008734">
    <property type="entry name" value="PRK11760.1"/>
    <property type="match status" value="1"/>
</dbReference>
<dbReference type="PANTHER" id="PTHR37524">
    <property type="entry name" value="RIBOSOMAL RNA LARGE SUBUNIT METHYLTRANSFERASE M"/>
    <property type="match status" value="1"/>
</dbReference>
<dbReference type="PANTHER" id="PTHR37524:SF2">
    <property type="entry name" value="RIBOSOMAL RNA METHYLTRANSFERASE FTSJ DOMAIN-CONTAINING PROTEIN"/>
    <property type="match status" value="1"/>
</dbReference>
<dbReference type="Pfam" id="PF01728">
    <property type="entry name" value="FtsJ"/>
    <property type="match status" value="1"/>
</dbReference>
<dbReference type="Pfam" id="PF18125">
    <property type="entry name" value="RlmM_FDX"/>
    <property type="match status" value="1"/>
</dbReference>
<dbReference type="Pfam" id="PF21239">
    <property type="entry name" value="RLMM_N"/>
    <property type="match status" value="1"/>
</dbReference>
<dbReference type="PIRSF" id="PIRSF028774">
    <property type="entry name" value="UCP028774"/>
    <property type="match status" value="1"/>
</dbReference>
<dbReference type="SUPFAM" id="SSF53335">
    <property type="entry name" value="S-adenosyl-L-methionine-dependent methyltransferases"/>
    <property type="match status" value="1"/>
</dbReference>
<sequence>MINLFLYCRAGYEKDCAAEIQQRAAELNVGGFVKTNRNDGYVIFQCFQVGDADLLAEQIELDSLIFTRQMFAANELLKDLPEGDRVTPIVDALAKVHRAGELRVETPDTNEAKELSTFCRKLTVPLRQALKRSGALLEKENPKRPIIHVCFVGPGTAYVGYSLSHNSSPYFMGIPRLKMASDAPSRSTLKLDEAFIHFIPKSEQEQRLRSGMNSVDLGACPGGWTYQLVRRGMFVAAVDNGPMAQNLMDTGQVRHYQADGFRFEPPKKNIYWLVCDMVEKPSRVAELMEAWAINGWFKEAIFNLKLPMKSRYKEVSTILATMQEVLRENGIDDFHLACKHLYHDRDEVTVHLWLKPSVGFNFG</sequence>
<keyword id="KW-0963">Cytoplasm</keyword>
<keyword id="KW-0489">Methyltransferase</keyword>
<keyword id="KW-1185">Reference proteome</keyword>
<keyword id="KW-0698">rRNA processing</keyword>
<keyword id="KW-0949">S-adenosyl-L-methionine</keyword>
<keyword id="KW-0808">Transferase</keyword>
<gene>
    <name evidence="1" type="primary">rlmM</name>
    <name type="ordered locus">Shew_2761</name>
</gene>
<organism>
    <name type="scientific">Shewanella loihica (strain ATCC BAA-1088 / PV-4)</name>
    <dbReference type="NCBI Taxonomy" id="323850"/>
    <lineage>
        <taxon>Bacteria</taxon>
        <taxon>Pseudomonadati</taxon>
        <taxon>Pseudomonadota</taxon>
        <taxon>Gammaproteobacteria</taxon>
        <taxon>Alteromonadales</taxon>
        <taxon>Shewanellaceae</taxon>
        <taxon>Shewanella</taxon>
    </lineage>
</organism>
<comment type="function">
    <text evidence="1">Catalyzes the 2'-O-methylation at nucleotide C2498 in 23S rRNA.</text>
</comment>
<comment type="catalytic activity">
    <reaction evidence="1">
        <text>cytidine(2498) in 23S rRNA + S-adenosyl-L-methionine = 2'-O-methylcytidine(2498) in 23S rRNA + S-adenosyl-L-homocysteine + H(+)</text>
        <dbReference type="Rhea" id="RHEA:42788"/>
        <dbReference type="Rhea" id="RHEA-COMP:10244"/>
        <dbReference type="Rhea" id="RHEA-COMP:10245"/>
        <dbReference type="ChEBI" id="CHEBI:15378"/>
        <dbReference type="ChEBI" id="CHEBI:57856"/>
        <dbReference type="ChEBI" id="CHEBI:59789"/>
        <dbReference type="ChEBI" id="CHEBI:74495"/>
        <dbReference type="ChEBI" id="CHEBI:82748"/>
        <dbReference type="EC" id="2.1.1.186"/>
    </reaction>
</comment>
<comment type="subunit">
    <text evidence="1">Monomer.</text>
</comment>
<comment type="subcellular location">
    <subcellularLocation>
        <location evidence="1">Cytoplasm</location>
    </subcellularLocation>
</comment>
<comment type="similarity">
    <text evidence="1">Belongs to the class I-like SAM-binding methyltransferase superfamily. RNA methyltransferase RlmE family. RlmM subfamily.</text>
</comment>